<protein>
    <recommendedName>
        <fullName evidence="1">Undecaprenyl-diphosphatase</fullName>
        <ecNumber evidence="1">3.6.1.27</ecNumber>
    </recommendedName>
    <alternativeName>
        <fullName evidence="1">Bacitracin resistance protein</fullName>
    </alternativeName>
    <alternativeName>
        <fullName evidence="1">Undecaprenyl pyrophosphate phosphatase</fullName>
    </alternativeName>
</protein>
<comment type="function">
    <text evidence="1">Catalyzes the dephosphorylation of undecaprenyl diphosphate (UPP). Confers resistance to bacitracin.</text>
</comment>
<comment type="catalytic activity">
    <reaction evidence="1">
        <text>di-trans,octa-cis-undecaprenyl diphosphate + H2O = di-trans,octa-cis-undecaprenyl phosphate + phosphate + H(+)</text>
        <dbReference type="Rhea" id="RHEA:28094"/>
        <dbReference type="ChEBI" id="CHEBI:15377"/>
        <dbReference type="ChEBI" id="CHEBI:15378"/>
        <dbReference type="ChEBI" id="CHEBI:43474"/>
        <dbReference type="ChEBI" id="CHEBI:58405"/>
        <dbReference type="ChEBI" id="CHEBI:60392"/>
        <dbReference type="EC" id="3.6.1.27"/>
    </reaction>
</comment>
<comment type="subcellular location">
    <subcellularLocation>
        <location evidence="1">Cell membrane</location>
        <topology evidence="1">Multi-pass membrane protein</topology>
    </subcellularLocation>
</comment>
<comment type="miscellaneous">
    <text>Bacitracin is thought to be involved in the inhibition of peptidoglycan synthesis by sequestering undecaprenyl diphosphate, thereby reducing the pool of lipid carrier available.</text>
</comment>
<comment type="similarity">
    <text evidence="1">Belongs to the UppP family.</text>
</comment>
<feature type="chain" id="PRO_1000148810" description="Undecaprenyl-diphosphatase">
    <location>
        <begin position="1"/>
        <end position="278"/>
    </location>
</feature>
<feature type="transmembrane region" description="Helical" evidence="1">
    <location>
        <begin position="2"/>
        <end position="22"/>
    </location>
</feature>
<feature type="transmembrane region" description="Helical" evidence="1">
    <location>
        <begin position="44"/>
        <end position="64"/>
    </location>
</feature>
<feature type="transmembrane region" description="Helical" evidence="1">
    <location>
        <begin position="85"/>
        <end position="105"/>
    </location>
</feature>
<feature type="transmembrane region" description="Helical" evidence="1">
    <location>
        <begin position="113"/>
        <end position="133"/>
    </location>
</feature>
<feature type="transmembrane region" description="Helical" evidence="1">
    <location>
        <begin position="150"/>
        <end position="170"/>
    </location>
</feature>
<feature type="transmembrane region" description="Helical" evidence="1">
    <location>
        <begin position="189"/>
        <end position="209"/>
    </location>
</feature>
<feature type="transmembrane region" description="Helical" evidence="1">
    <location>
        <begin position="223"/>
        <end position="243"/>
    </location>
</feature>
<feature type="transmembrane region" description="Helical" evidence="1">
    <location>
        <begin position="253"/>
        <end position="273"/>
    </location>
</feature>
<keyword id="KW-0046">Antibiotic resistance</keyword>
<keyword id="KW-1003">Cell membrane</keyword>
<keyword id="KW-0133">Cell shape</keyword>
<keyword id="KW-0961">Cell wall biogenesis/degradation</keyword>
<keyword id="KW-0378">Hydrolase</keyword>
<keyword id="KW-0472">Membrane</keyword>
<keyword id="KW-0573">Peptidoglycan synthesis</keyword>
<keyword id="KW-0812">Transmembrane</keyword>
<keyword id="KW-1133">Transmembrane helix</keyword>
<organism>
    <name type="scientific">Desulfitobacterium hafniense (strain DSM 10664 / DCB-2)</name>
    <dbReference type="NCBI Taxonomy" id="272564"/>
    <lineage>
        <taxon>Bacteria</taxon>
        <taxon>Bacillati</taxon>
        <taxon>Bacillota</taxon>
        <taxon>Clostridia</taxon>
        <taxon>Eubacteriales</taxon>
        <taxon>Desulfitobacteriaceae</taxon>
        <taxon>Desulfitobacterium</taxon>
    </lineage>
</organism>
<name>UPPP_DESHD</name>
<proteinExistence type="inferred from homology"/>
<sequence length="278" mass="31062">MALVEIFKAILLGIVEGITEWLPISSTGHMILVDEFIKLNMSAAFMEMFFVVIQLGAILAVVLLYWKKLNPFTFDRGVSVKQETIEMWFKIIVSCIPAGVIGLLWDDVFNALFYNYQTVAVMLIIFGILFIVIENYNKGKRPRVNHLSQITYTTAFMIGIFQLIAAIFPGTSRSGATIVGGLLLGVSRTVAAEFTFFLAIPVMFGASALKLLKFGFNFTGPELMILLIGMVVAFIVSVISIKFLMGYIKKNDFKIFGWYRIILGVIVLLYFSARTIIG</sequence>
<accession>B8FX50</accession>
<evidence type="ECO:0000255" key="1">
    <source>
        <dbReference type="HAMAP-Rule" id="MF_01006"/>
    </source>
</evidence>
<gene>
    <name evidence="1" type="primary">uppP</name>
    <name type="ordered locus">Dhaf_0873</name>
</gene>
<dbReference type="EC" id="3.6.1.27" evidence="1"/>
<dbReference type="EMBL" id="CP001336">
    <property type="protein sequence ID" value="ACL18936.1"/>
    <property type="molecule type" value="Genomic_DNA"/>
</dbReference>
<dbReference type="RefSeq" id="WP_005808347.1">
    <property type="nucleotide sequence ID" value="NC_011830.1"/>
</dbReference>
<dbReference type="SMR" id="B8FX50"/>
<dbReference type="KEGG" id="dhd:Dhaf_0873"/>
<dbReference type="HOGENOM" id="CLU_060296_2_0_9"/>
<dbReference type="Proteomes" id="UP000007726">
    <property type="component" value="Chromosome"/>
</dbReference>
<dbReference type="GO" id="GO:0005886">
    <property type="term" value="C:plasma membrane"/>
    <property type="evidence" value="ECO:0007669"/>
    <property type="project" value="UniProtKB-SubCell"/>
</dbReference>
<dbReference type="GO" id="GO:0050380">
    <property type="term" value="F:undecaprenyl-diphosphatase activity"/>
    <property type="evidence" value="ECO:0007669"/>
    <property type="project" value="UniProtKB-UniRule"/>
</dbReference>
<dbReference type="GO" id="GO:0071555">
    <property type="term" value="P:cell wall organization"/>
    <property type="evidence" value="ECO:0007669"/>
    <property type="project" value="UniProtKB-KW"/>
</dbReference>
<dbReference type="GO" id="GO:0009252">
    <property type="term" value="P:peptidoglycan biosynthetic process"/>
    <property type="evidence" value="ECO:0007669"/>
    <property type="project" value="UniProtKB-KW"/>
</dbReference>
<dbReference type="GO" id="GO:0008360">
    <property type="term" value="P:regulation of cell shape"/>
    <property type="evidence" value="ECO:0007669"/>
    <property type="project" value="UniProtKB-KW"/>
</dbReference>
<dbReference type="GO" id="GO:0046677">
    <property type="term" value="P:response to antibiotic"/>
    <property type="evidence" value="ECO:0007669"/>
    <property type="project" value="UniProtKB-UniRule"/>
</dbReference>
<dbReference type="HAMAP" id="MF_01006">
    <property type="entry name" value="Undec_diphosphatase"/>
    <property type="match status" value="1"/>
</dbReference>
<dbReference type="InterPro" id="IPR003824">
    <property type="entry name" value="UppP"/>
</dbReference>
<dbReference type="NCBIfam" id="NF001389">
    <property type="entry name" value="PRK00281.1-2"/>
    <property type="match status" value="1"/>
</dbReference>
<dbReference type="NCBIfam" id="NF001390">
    <property type="entry name" value="PRK00281.1-4"/>
    <property type="match status" value="1"/>
</dbReference>
<dbReference type="NCBIfam" id="NF001391">
    <property type="entry name" value="PRK00281.1-5"/>
    <property type="match status" value="1"/>
</dbReference>
<dbReference type="NCBIfam" id="TIGR00753">
    <property type="entry name" value="undec_PP_bacA"/>
    <property type="match status" value="1"/>
</dbReference>
<dbReference type="PANTHER" id="PTHR30622">
    <property type="entry name" value="UNDECAPRENYL-DIPHOSPHATASE"/>
    <property type="match status" value="1"/>
</dbReference>
<dbReference type="PANTHER" id="PTHR30622:SF3">
    <property type="entry name" value="UNDECAPRENYL-DIPHOSPHATASE"/>
    <property type="match status" value="1"/>
</dbReference>
<dbReference type="Pfam" id="PF02673">
    <property type="entry name" value="BacA"/>
    <property type="match status" value="1"/>
</dbReference>
<reference key="1">
    <citation type="journal article" date="2012" name="BMC Microbiol.">
        <title>Genome sequence of Desulfitobacterium hafniense DCB-2, a Gram-positive anaerobe capable of dehalogenation and metal reduction.</title>
        <authorList>
            <person name="Kim S.H."/>
            <person name="Harzman C."/>
            <person name="Davis J.K."/>
            <person name="Hutcheson R."/>
            <person name="Broderick J.B."/>
            <person name="Marsh T.L."/>
            <person name="Tiedje J.M."/>
        </authorList>
    </citation>
    <scope>NUCLEOTIDE SEQUENCE [LARGE SCALE GENOMIC DNA]</scope>
    <source>
        <strain>DSM 10664 / DCB-2</strain>
    </source>
</reference>